<keyword id="KW-0028">Amino-acid biosynthesis</keyword>
<keyword id="KW-0413">Isomerase</keyword>
<keyword id="KW-0486">Methionine biosynthesis</keyword>
<organism>
    <name type="scientific">Caldicellulosiruptor saccharolyticus (strain ATCC 43494 / DSM 8903 / Tp8T 6331)</name>
    <dbReference type="NCBI Taxonomy" id="351627"/>
    <lineage>
        <taxon>Bacteria</taxon>
        <taxon>Bacillati</taxon>
        <taxon>Bacillota</taxon>
        <taxon>Bacillota incertae sedis</taxon>
        <taxon>Caldicellulosiruptorales</taxon>
        <taxon>Caldicellulosiruptoraceae</taxon>
        <taxon>Caldicellulosiruptor</taxon>
    </lineage>
</organism>
<dbReference type="EC" id="5.3.1.23" evidence="1"/>
<dbReference type="EMBL" id="CP000679">
    <property type="protein sequence ID" value="ABP67508.1"/>
    <property type="molecule type" value="Genomic_DNA"/>
</dbReference>
<dbReference type="RefSeq" id="WP_011917444.1">
    <property type="nucleotide sequence ID" value="NC_009437.1"/>
</dbReference>
<dbReference type="SMR" id="A4XKS3"/>
<dbReference type="STRING" id="351627.Csac_1923"/>
<dbReference type="KEGG" id="csc:Csac_1923"/>
<dbReference type="eggNOG" id="COG0182">
    <property type="taxonomic scope" value="Bacteria"/>
</dbReference>
<dbReference type="HOGENOM" id="CLU_016218_1_2_9"/>
<dbReference type="OrthoDB" id="9803436at2"/>
<dbReference type="UniPathway" id="UPA00904">
    <property type="reaction ID" value="UER00874"/>
</dbReference>
<dbReference type="Proteomes" id="UP000000256">
    <property type="component" value="Chromosome"/>
</dbReference>
<dbReference type="GO" id="GO:0046523">
    <property type="term" value="F:S-methyl-5-thioribose-1-phosphate isomerase activity"/>
    <property type="evidence" value="ECO:0007669"/>
    <property type="project" value="UniProtKB-UniRule"/>
</dbReference>
<dbReference type="GO" id="GO:0019509">
    <property type="term" value="P:L-methionine salvage from methylthioadenosine"/>
    <property type="evidence" value="ECO:0007669"/>
    <property type="project" value="UniProtKB-UniRule"/>
</dbReference>
<dbReference type="FunFam" id="1.20.120.420:FF:000003">
    <property type="entry name" value="Methylthioribose-1-phosphate isomerase"/>
    <property type="match status" value="1"/>
</dbReference>
<dbReference type="FunFam" id="3.40.50.10470:FF:000006">
    <property type="entry name" value="Methylthioribose-1-phosphate isomerase"/>
    <property type="match status" value="1"/>
</dbReference>
<dbReference type="Gene3D" id="1.20.120.420">
    <property type="entry name" value="translation initiation factor eif-2b, domain 1"/>
    <property type="match status" value="1"/>
</dbReference>
<dbReference type="Gene3D" id="3.40.50.10470">
    <property type="entry name" value="Translation initiation factor eif-2b, domain 2"/>
    <property type="match status" value="1"/>
</dbReference>
<dbReference type="HAMAP" id="MF_01678">
    <property type="entry name" value="Salvage_MtnA"/>
    <property type="match status" value="1"/>
</dbReference>
<dbReference type="InterPro" id="IPR000649">
    <property type="entry name" value="IF-2B-related"/>
</dbReference>
<dbReference type="InterPro" id="IPR005251">
    <property type="entry name" value="IF-M1Pi"/>
</dbReference>
<dbReference type="InterPro" id="IPR042529">
    <property type="entry name" value="IF_2B-like_C"/>
</dbReference>
<dbReference type="InterPro" id="IPR011559">
    <property type="entry name" value="Initiation_fac_2B_a/b/d"/>
</dbReference>
<dbReference type="InterPro" id="IPR027363">
    <property type="entry name" value="M1Pi_N"/>
</dbReference>
<dbReference type="InterPro" id="IPR037171">
    <property type="entry name" value="NagB/RpiA_transferase-like"/>
</dbReference>
<dbReference type="NCBIfam" id="TIGR00524">
    <property type="entry name" value="eIF-2B_rel"/>
    <property type="match status" value="1"/>
</dbReference>
<dbReference type="NCBIfam" id="NF004326">
    <property type="entry name" value="PRK05720.1"/>
    <property type="match status" value="1"/>
</dbReference>
<dbReference type="NCBIfam" id="TIGR00512">
    <property type="entry name" value="salvage_mtnA"/>
    <property type="match status" value="1"/>
</dbReference>
<dbReference type="PANTHER" id="PTHR43475">
    <property type="entry name" value="METHYLTHIORIBOSE-1-PHOSPHATE ISOMERASE"/>
    <property type="match status" value="1"/>
</dbReference>
<dbReference type="PANTHER" id="PTHR43475:SF1">
    <property type="entry name" value="METHYLTHIORIBOSE-1-PHOSPHATE ISOMERASE"/>
    <property type="match status" value="1"/>
</dbReference>
<dbReference type="Pfam" id="PF01008">
    <property type="entry name" value="IF-2B"/>
    <property type="match status" value="1"/>
</dbReference>
<dbReference type="SUPFAM" id="SSF100950">
    <property type="entry name" value="NagB/RpiA/CoA transferase-like"/>
    <property type="match status" value="1"/>
</dbReference>
<proteinExistence type="inferred from homology"/>
<name>MTNA_CALS8</name>
<protein>
    <recommendedName>
        <fullName evidence="1">Methylthioribose-1-phosphate isomerase</fullName>
        <shortName evidence="1">M1Pi</shortName>
        <shortName evidence="1">MTR-1-P isomerase</shortName>
        <ecNumber evidence="1">5.3.1.23</ecNumber>
    </recommendedName>
    <alternativeName>
        <fullName evidence="1">S-methyl-5-thioribose-1-phosphate isomerase</fullName>
    </alternativeName>
</protein>
<gene>
    <name evidence="1" type="primary">mtnA</name>
    <name type="ordered locus">Csac_1923</name>
</gene>
<accession>A4XKS3</accession>
<evidence type="ECO:0000255" key="1">
    <source>
        <dbReference type="HAMAP-Rule" id="MF_01678"/>
    </source>
</evidence>
<evidence type="ECO:0000305" key="2"/>
<comment type="function">
    <text evidence="1">Catalyzes the interconversion of methylthioribose-1-phosphate (MTR-1-P) into methylthioribulose-1-phosphate (MTRu-1-P).</text>
</comment>
<comment type="catalytic activity">
    <reaction evidence="1">
        <text>5-(methylsulfanyl)-alpha-D-ribose 1-phosphate = 5-(methylsulfanyl)-D-ribulose 1-phosphate</text>
        <dbReference type="Rhea" id="RHEA:19989"/>
        <dbReference type="ChEBI" id="CHEBI:58533"/>
        <dbReference type="ChEBI" id="CHEBI:58548"/>
        <dbReference type="EC" id="5.3.1.23"/>
    </reaction>
</comment>
<comment type="pathway">
    <text evidence="1">Amino-acid biosynthesis; L-methionine biosynthesis via salvage pathway; L-methionine from S-methyl-5-thio-alpha-D-ribose 1-phosphate: step 1/6.</text>
</comment>
<comment type="similarity">
    <text evidence="2">Belongs to the eIF-2B alpha/beta/delta subunits family. MtnA subfamily.</text>
</comment>
<sequence length="342" mass="38175">MKHFEFENDKLIVLDQRKLPFEKEYFVCSTYQDVYIAIKDMIIRGAPLIGIVAAYGVVLGFKEIIEKNMDSAKIYEILNYLANSRPTAVNLFWALERMKKVFEEARNLSKSQIYSLLMQEAKKIEDEDKSINKKIGEHGNTLIKEGANILTHCNAGALATGGYGTALGVIREAFFAGKNIHVYVDETRPYLQGARLTAFELSEDGIPNTVICDNMAGYLMKLGKIDCVIVGADRIALNGDTANKIGTYSLSVLAKHHGIPFYISAPISTIDFNIKSGSEIPIEERSEDEIRFFNGKKIVPDESKVFNPAFDVTPAENITAIITEKGVVFPPFEENISKLKEK</sequence>
<reference key="1">
    <citation type="submission" date="2007-04" db="EMBL/GenBank/DDBJ databases">
        <title>Genome sequence of the thermophilic hydrogen-producing bacterium Caldicellulosiruptor saccharolyticus DSM 8903.</title>
        <authorList>
            <person name="Copeland A."/>
            <person name="Lucas S."/>
            <person name="Lapidus A."/>
            <person name="Barry K."/>
            <person name="Detter J.C."/>
            <person name="Glavina del Rio T."/>
            <person name="Hammon N."/>
            <person name="Israni S."/>
            <person name="Dalin E."/>
            <person name="Tice H."/>
            <person name="Pitluck S."/>
            <person name="Kiss H."/>
            <person name="Brettin T."/>
            <person name="Bruce D."/>
            <person name="Han C."/>
            <person name="Schmutz J."/>
            <person name="Larimer F."/>
            <person name="Land M."/>
            <person name="Hauser L."/>
            <person name="Kyrpides N."/>
            <person name="Lykidis A."/>
            <person name="van de Werken H.J.G."/>
            <person name="Verhaart M.R.A."/>
            <person name="VanFossen A.L."/>
            <person name="Lewis D.L."/>
            <person name="Nichols J.D."/>
            <person name="Goorissen H.P."/>
            <person name="van Niel E.W.J."/>
            <person name="Stams F.J.M."/>
            <person name="Willquist K.U."/>
            <person name="Ward D.E."/>
            <person name="van der Oost J."/>
            <person name="Kelly R.M."/>
            <person name="Kengen S.M.W."/>
            <person name="Richardson P."/>
        </authorList>
    </citation>
    <scope>NUCLEOTIDE SEQUENCE [LARGE SCALE GENOMIC DNA]</scope>
    <source>
        <strain>ATCC 43494 / DSM 8903 / Tp8T 6331</strain>
    </source>
</reference>
<feature type="chain" id="PRO_0000357157" description="Methylthioribose-1-phosphate isomerase">
    <location>
        <begin position="1"/>
        <end position="342"/>
    </location>
</feature>
<feature type="active site" description="Proton donor" evidence="1">
    <location>
        <position position="233"/>
    </location>
</feature>
<feature type="binding site" evidence="1">
    <location>
        <begin position="44"/>
        <end position="46"/>
    </location>
    <ligand>
        <name>substrate</name>
    </ligand>
</feature>
<feature type="binding site" evidence="1">
    <location>
        <position position="85"/>
    </location>
    <ligand>
        <name>substrate</name>
    </ligand>
</feature>
<feature type="binding site" evidence="1">
    <location>
        <position position="192"/>
    </location>
    <ligand>
        <name>substrate</name>
    </ligand>
</feature>
<feature type="binding site" evidence="1">
    <location>
        <begin position="243"/>
        <end position="244"/>
    </location>
    <ligand>
        <name>substrate</name>
    </ligand>
</feature>
<feature type="site" description="Transition state stabilizer" evidence="1">
    <location>
        <position position="153"/>
    </location>
</feature>